<organism>
    <name type="scientific">Shigella flexneri</name>
    <dbReference type="NCBI Taxonomy" id="623"/>
    <lineage>
        <taxon>Bacteria</taxon>
        <taxon>Pseudomonadati</taxon>
        <taxon>Pseudomonadota</taxon>
        <taxon>Gammaproteobacteria</taxon>
        <taxon>Enterobacterales</taxon>
        <taxon>Enterobacteriaceae</taxon>
        <taxon>Shigella</taxon>
    </lineage>
</organism>
<evidence type="ECO:0000255" key="1">
    <source>
        <dbReference type="HAMAP-Rule" id="MF_00168"/>
    </source>
</evidence>
<feature type="chain" id="PRO_0000135520" description="Queuine tRNA-ribosyltransferase">
    <location>
        <begin position="1"/>
        <end position="375"/>
    </location>
</feature>
<feature type="region of interest" description="RNA binding" evidence="1">
    <location>
        <begin position="245"/>
        <end position="251"/>
    </location>
</feature>
<feature type="region of interest" description="RNA binding; important for wobble base 34 recognition" evidence="1">
    <location>
        <begin position="269"/>
        <end position="273"/>
    </location>
</feature>
<feature type="active site" description="Proton acceptor" evidence="1">
    <location>
        <position position="89"/>
    </location>
</feature>
<feature type="active site" description="Nucleophile" evidence="1">
    <location>
        <position position="264"/>
    </location>
</feature>
<feature type="binding site" evidence="1">
    <location>
        <begin position="89"/>
        <end position="93"/>
    </location>
    <ligand>
        <name>substrate</name>
    </ligand>
</feature>
<feature type="binding site" evidence="1">
    <location>
        <position position="143"/>
    </location>
    <ligand>
        <name>substrate</name>
    </ligand>
</feature>
<feature type="binding site" evidence="1">
    <location>
        <position position="187"/>
    </location>
    <ligand>
        <name>substrate</name>
    </ligand>
</feature>
<feature type="binding site" evidence="1">
    <location>
        <position position="214"/>
    </location>
    <ligand>
        <name>substrate</name>
    </ligand>
</feature>
<feature type="binding site" evidence="1">
    <location>
        <position position="302"/>
    </location>
    <ligand>
        <name>Zn(2+)</name>
        <dbReference type="ChEBI" id="CHEBI:29105"/>
    </ligand>
</feature>
<feature type="binding site" evidence="1">
    <location>
        <position position="304"/>
    </location>
    <ligand>
        <name>Zn(2+)</name>
        <dbReference type="ChEBI" id="CHEBI:29105"/>
    </ligand>
</feature>
<feature type="binding site" evidence="1">
    <location>
        <position position="307"/>
    </location>
    <ligand>
        <name>Zn(2+)</name>
        <dbReference type="ChEBI" id="CHEBI:29105"/>
    </ligand>
</feature>
<feature type="binding site" evidence="1">
    <location>
        <position position="333"/>
    </location>
    <ligand>
        <name>Zn(2+)</name>
        <dbReference type="ChEBI" id="CHEBI:29105"/>
    </ligand>
</feature>
<protein>
    <recommendedName>
        <fullName evidence="1">Queuine tRNA-ribosyltransferase</fullName>
        <ecNumber evidence="1">2.4.2.29</ecNumber>
    </recommendedName>
    <alternativeName>
        <fullName evidence="1">Guanine insertion enzyme</fullName>
    </alternativeName>
    <alternativeName>
        <fullName evidence="1">tRNA-guanine transglycosylase</fullName>
    </alternativeName>
</protein>
<name>TGT_SHIFL</name>
<accession>Q54177</accession>
<comment type="function">
    <text>Important for virulence.</text>
</comment>
<comment type="function">
    <text evidence="1">Catalyzes the base-exchange of a guanine (G) residue with the queuine precursor 7-aminomethyl-7-deazaguanine (PreQ1) at position 34 (anticodon wobble position) in tRNAs with GU(N) anticodons (tRNA-Asp, -Asn, -His and -Tyr). Catalysis occurs through a double-displacement mechanism. The nucleophile active site attacks the C1' of nucleotide 34 to detach the guanine base from the RNA, forming a covalent enzyme-RNA intermediate. The proton acceptor active site deprotonates the incoming PreQ1, allowing a nucleophilic attack on the C1' of the ribose to form the product. After dissociation, two additional enzymatic reactions on the tRNA convert PreQ1 to queuine (Q), resulting in the hypermodified nucleoside queuosine (7-(((4,5-cis-dihydroxy-2-cyclopenten-1-yl)amino)methyl)-7-deazaguanosine).</text>
</comment>
<comment type="catalytic activity">
    <reaction evidence="1">
        <text>7-aminomethyl-7-carbaguanine + guanosine(34) in tRNA = 7-aminomethyl-7-carbaguanosine(34) in tRNA + guanine</text>
        <dbReference type="Rhea" id="RHEA:24104"/>
        <dbReference type="Rhea" id="RHEA-COMP:10341"/>
        <dbReference type="Rhea" id="RHEA-COMP:10342"/>
        <dbReference type="ChEBI" id="CHEBI:16235"/>
        <dbReference type="ChEBI" id="CHEBI:58703"/>
        <dbReference type="ChEBI" id="CHEBI:74269"/>
        <dbReference type="ChEBI" id="CHEBI:82833"/>
        <dbReference type="EC" id="2.4.2.29"/>
    </reaction>
</comment>
<comment type="cofactor">
    <cofactor evidence="1">
        <name>Zn(2+)</name>
        <dbReference type="ChEBI" id="CHEBI:29105"/>
    </cofactor>
    <text evidence="1">Binds 1 zinc ion per subunit.</text>
</comment>
<comment type="pathway">
    <text evidence="1">tRNA modification; tRNA-queuosine biosynthesis.</text>
</comment>
<comment type="subunit">
    <text evidence="1">Homodimer. Within each dimer, one monomer is responsible for RNA recognition and catalysis, while the other monomer binds to the replacement base PreQ1.</text>
</comment>
<comment type="similarity">
    <text evidence="1">Belongs to the queuine tRNA-ribosyltransferase family.</text>
</comment>
<keyword id="KW-0328">Glycosyltransferase</keyword>
<keyword id="KW-0479">Metal-binding</keyword>
<keyword id="KW-0671">Queuosine biosynthesis</keyword>
<keyword id="KW-1185">Reference proteome</keyword>
<keyword id="KW-0808">Transferase</keyword>
<keyword id="KW-0819">tRNA processing</keyword>
<keyword id="KW-0843">Virulence</keyword>
<keyword id="KW-0862">Zinc</keyword>
<proteinExistence type="inferred from homology"/>
<dbReference type="EC" id="2.4.2.29" evidence="1"/>
<dbReference type="EMBL" id="D26469">
    <property type="protein sequence ID" value="BAA05482.1"/>
    <property type="molecule type" value="Genomic_DNA"/>
</dbReference>
<dbReference type="EMBL" id="AE005674">
    <property type="protein sequence ID" value="AAN42001.1"/>
    <property type="molecule type" value="Genomic_DNA"/>
</dbReference>
<dbReference type="EMBL" id="AE014073">
    <property type="protein sequence ID" value="AAP15878.1"/>
    <property type="molecule type" value="Genomic_DNA"/>
</dbReference>
<dbReference type="RefSeq" id="NP_706294.1">
    <property type="nucleotide sequence ID" value="NC_004337.2"/>
</dbReference>
<dbReference type="RefSeq" id="WP_000667315.1">
    <property type="nucleotide sequence ID" value="NZ_WPGW01000023.1"/>
</dbReference>
<dbReference type="SMR" id="Q54177"/>
<dbReference type="STRING" id="198214.SF0343"/>
<dbReference type="PaxDb" id="198214-SF0343"/>
<dbReference type="GeneID" id="1027667"/>
<dbReference type="KEGG" id="sfl:SF0343"/>
<dbReference type="KEGG" id="sfx:S0351"/>
<dbReference type="PATRIC" id="fig|198214.7.peg.394"/>
<dbReference type="HOGENOM" id="CLU_022060_0_1_6"/>
<dbReference type="BRENDA" id="2.4.2.29">
    <property type="organism ID" value="5712"/>
</dbReference>
<dbReference type="UniPathway" id="UPA00392"/>
<dbReference type="Proteomes" id="UP000001006">
    <property type="component" value="Chromosome"/>
</dbReference>
<dbReference type="Proteomes" id="UP000002673">
    <property type="component" value="Chromosome"/>
</dbReference>
<dbReference type="GO" id="GO:0005829">
    <property type="term" value="C:cytosol"/>
    <property type="evidence" value="ECO:0007669"/>
    <property type="project" value="TreeGrafter"/>
</dbReference>
<dbReference type="GO" id="GO:0046872">
    <property type="term" value="F:metal ion binding"/>
    <property type="evidence" value="ECO:0007669"/>
    <property type="project" value="UniProtKB-KW"/>
</dbReference>
<dbReference type="GO" id="GO:0008479">
    <property type="term" value="F:tRNA-guanosine(34) queuine transglycosylase activity"/>
    <property type="evidence" value="ECO:0007669"/>
    <property type="project" value="UniProtKB-UniRule"/>
</dbReference>
<dbReference type="GO" id="GO:0008616">
    <property type="term" value="P:queuosine biosynthetic process"/>
    <property type="evidence" value="ECO:0007669"/>
    <property type="project" value="UniProtKB-UniRule"/>
</dbReference>
<dbReference type="GO" id="GO:0002099">
    <property type="term" value="P:tRNA wobble guanine modification"/>
    <property type="evidence" value="ECO:0007669"/>
    <property type="project" value="TreeGrafter"/>
</dbReference>
<dbReference type="GO" id="GO:0101030">
    <property type="term" value="P:tRNA-guanine transglycosylation"/>
    <property type="evidence" value="ECO:0007669"/>
    <property type="project" value="InterPro"/>
</dbReference>
<dbReference type="FunFam" id="3.20.20.105:FF:000001">
    <property type="entry name" value="Queuine tRNA-ribosyltransferase"/>
    <property type="match status" value="1"/>
</dbReference>
<dbReference type="Gene3D" id="3.20.20.105">
    <property type="entry name" value="Queuine tRNA-ribosyltransferase-like"/>
    <property type="match status" value="1"/>
</dbReference>
<dbReference type="HAMAP" id="MF_00168">
    <property type="entry name" value="Q_tRNA_Tgt"/>
    <property type="match status" value="1"/>
</dbReference>
<dbReference type="InterPro" id="IPR050076">
    <property type="entry name" value="ArchSynthase1/Queuine_TRR"/>
</dbReference>
<dbReference type="InterPro" id="IPR004803">
    <property type="entry name" value="TGT"/>
</dbReference>
<dbReference type="InterPro" id="IPR036511">
    <property type="entry name" value="TGT-like_sf"/>
</dbReference>
<dbReference type="InterPro" id="IPR002616">
    <property type="entry name" value="tRNA_ribo_trans-like"/>
</dbReference>
<dbReference type="NCBIfam" id="TIGR00430">
    <property type="entry name" value="Q_tRNA_tgt"/>
    <property type="match status" value="1"/>
</dbReference>
<dbReference type="NCBIfam" id="TIGR00449">
    <property type="entry name" value="tgt_general"/>
    <property type="match status" value="1"/>
</dbReference>
<dbReference type="PANTHER" id="PTHR46499">
    <property type="entry name" value="QUEUINE TRNA-RIBOSYLTRANSFERASE"/>
    <property type="match status" value="1"/>
</dbReference>
<dbReference type="PANTHER" id="PTHR46499:SF1">
    <property type="entry name" value="QUEUINE TRNA-RIBOSYLTRANSFERASE"/>
    <property type="match status" value="1"/>
</dbReference>
<dbReference type="Pfam" id="PF01702">
    <property type="entry name" value="TGT"/>
    <property type="match status" value="1"/>
</dbReference>
<dbReference type="SUPFAM" id="SSF51713">
    <property type="entry name" value="tRNA-guanine transglycosylase"/>
    <property type="match status" value="1"/>
</dbReference>
<sequence length="375" mass="42608">MKFELDTTDGRARRGRLVFDRGVVETPCFMPVGTYGTVKGMTPEEVEATGAQIILGNTFHLWLRPGQEIMKLHGDLHDFMQWKGPILTDSGGFQVFSLGDIRKITEQGVHFRNPINGDPIFLDPEKSMEIQYDLGSDIVMIFDECTPYPADWDYAKRSMEMSLRWAKRSRERFDSLGNKNALFGIIQGSIYEDLRDISVKGLVDIGFDGYAVGGLAVGEPKADMHRILEHVCPQIPADKPRYLMGVGKPEDLVEGVRRGIDMFDCVMPTRNARNGHLFVTDGVVKIRNAKYKSDTGPLDPECDCYTCRNYSRAYLHHLDRCNEILGARLNTIHNLRYYQRLMAGLRKAIEEGKLESFVTDFYQRQGREVPPLNVD</sequence>
<reference key="1">
    <citation type="journal article" date="1994" name="J. Bacteriol.">
        <title>vacC, a virulence-associated chromosomal locus of Shigella flexneri, is homologous to tgt, a gene encoding tRNA-guanine transglycosylase (Tgt) of Escherichia coli K-12.</title>
        <authorList>
            <person name="Durand J.M."/>
            <person name="Okada N."/>
            <person name="Tobe T."/>
            <person name="Watarai M."/>
            <person name="Fukuda I."/>
            <person name="Suzuki T."/>
            <person name="Nakata N."/>
            <person name="Komatsu K."/>
            <person name="Yoshikawa M."/>
            <person name="Sasakawa C."/>
        </authorList>
    </citation>
    <scope>NUCLEOTIDE SEQUENCE [GENOMIC DNA]</scope>
    <source>
        <strain>YSH6000 / Serotype 2a</strain>
    </source>
</reference>
<reference key="2">
    <citation type="journal article" date="2002" name="Nucleic Acids Res.">
        <title>Genome sequence of Shigella flexneri 2a: insights into pathogenicity through comparison with genomes of Escherichia coli K12 and O157.</title>
        <authorList>
            <person name="Jin Q."/>
            <person name="Yuan Z."/>
            <person name="Xu J."/>
            <person name="Wang Y."/>
            <person name="Shen Y."/>
            <person name="Lu W."/>
            <person name="Wang J."/>
            <person name="Liu H."/>
            <person name="Yang J."/>
            <person name="Yang F."/>
            <person name="Zhang X."/>
            <person name="Zhang J."/>
            <person name="Yang G."/>
            <person name="Wu H."/>
            <person name="Qu D."/>
            <person name="Dong J."/>
            <person name="Sun L."/>
            <person name="Xue Y."/>
            <person name="Zhao A."/>
            <person name="Gao Y."/>
            <person name="Zhu J."/>
            <person name="Kan B."/>
            <person name="Ding K."/>
            <person name="Chen S."/>
            <person name="Cheng H."/>
            <person name="Yao Z."/>
            <person name="He B."/>
            <person name="Chen R."/>
            <person name="Ma D."/>
            <person name="Qiang B."/>
            <person name="Wen Y."/>
            <person name="Hou Y."/>
            <person name="Yu J."/>
        </authorList>
    </citation>
    <scope>NUCLEOTIDE SEQUENCE [LARGE SCALE GENOMIC DNA]</scope>
    <source>
        <strain>301 / Serotype 2a</strain>
    </source>
</reference>
<reference key="3">
    <citation type="journal article" date="2003" name="Infect. Immun.">
        <title>Complete genome sequence and comparative genomics of Shigella flexneri serotype 2a strain 2457T.</title>
        <authorList>
            <person name="Wei J."/>
            <person name="Goldberg M.B."/>
            <person name="Burland V."/>
            <person name="Venkatesan M.M."/>
            <person name="Deng W."/>
            <person name="Fournier G."/>
            <person name="Mayhew G.F."/>
            <person name="Plunkett G. III"/>
            <person name="Rose D.J."/>
            <person name="Darling A."/>
            <person name="Mau B."/>
            <person name="Perna N.T."/>
            <person name="Payne S.M."/>
            <person name="Runyen-Janecky L.J."/>
            <person name="Zhou S."/>
            <person name="Schwartz D.C."/>
            <person name="Blattner F.R."/>
        </authorList>
    </citation>
    <scope>NUCLEOTIDE SEQUENCE [LARGE SCALE GENOMIC DNA]</scope>
    <source>
        <strain>ATCC 700930 / 2457T / Serotype 2a</strain>
    </source>
</reference>
<gene>
    <name evidence="1" type="primary">tgt</name>
    <name type="synonym">vacC</name>
    <name type="ordered locus">SF0343</name>
    <name type="ordered locus">S0351</name>
</gene>